<keyword id="KW-0413">Isomerase</keyword>
<keyword id="KW-1185">Reference proteome</keyword>
<accession>Q814P5</accession>
<sequence length="61" mass="6741">MPYVTVKMLEGRTEEQKKALAEKVTAAVSETTGAPEENIVVFIEEMSKNHYAVGGKRLSDK</sequence>
<reference key="1">
    <citation type="journal article" date="2003" name="Nature">
        <title>Genome sequence of Bacillus cereus and comparative analysis with Bacillus anthracis.</title>
        <authorList>
            <person name="Ivanova N."/>
            <person name="Sorokin A."/>
            <person name="Anderson I."/>
            <person name="Galleron N."/>
            <person name="Candelon B."/>
            <person name="Kapatral V."/>
            <person name="Bhattacharyya A."/>
            <person name="Reznik G."/>
            <person name="Mikhailova N."/>
            <person name="Lapidus A."/>
            <person name="Chu L."/>
            <person name="Mazur M."/>
            <person name="Goltsman E."/>
            <person name="Larsen N."/>
            <person name="D'Souza M."/>
            <person name="Walunas T."/>
            <person name="Grechkin Y."/>
            <person name="Pusch G."/>
            <person name="Haselkorn R."/>
            <person name="Fonstein M."/>
            <person name="Ehrlich S.D."/>
            <person name="Overbeek R."/>
            <person name="Kyrpides N.C."/>
        </authorList>
    </citation>
    <scope>NUCLEOTIDE SEQUENCE [LARGE SCALE GENOMIC DNA]</scope>
    <source>
        <strain>ATCC 14579 / DSM 31 / CCUG 7414 / JCM 2152 / NBRC 15305 / NCIMB 9373 / NCTC 2599 / NRRL B-3711</strain>
    </source>
</reference>
<name>Y5378_BACCR</name>
<protein>
    <recommendedName>
        <fullName>Probable tautomerase BC_5378</fullName>
        <ecNumber>5.3.2.-</ecNumber>
    </recommendedName>
</protein>
<proteinExistence type="inferred from homology"/>
<gene>
    <name type="ordered locus">BC_5378</name>
</gene>
<feature type="initiator methionine" description="Removed" evidence="1">
    <location>
        <position position="1"/>
    </location>
</feature>
<feature type="chain" id="PRO_0000209520" description="Probable tautomerase BC_5378">
    <location>
        <begin position="2"/>
        <end position="61"/>
    </location>
</feature>
<feature type="active site" description="Proton acceptor; via imino nitrogen" evidence="1">
    <location>
        <position position="2"/>
    </location>
</feature>
<comment type="similarity">
    <text evidence="2">Belongs to the 4-oxalocrotonate tautomerase family.</text>
</comment>
<comment type="sequence caution" evidence="2">
    <conflict type="erroneous initiation">
        <sequence resource="EMBL-CDS" id="AAP12240"/>
    </conflict>
</comment>
<evidence type="ECO:0000250" key="1"/>
<evidence type="ECO:0000305" key="2"/>
<dbReference type="EC" id="5.3.2.-"/>
<dbReference type="EMBL" id="AE016877">
    <property type="protein sequence ID" value="AAP12240.1"/>
    <property type="status" value="ALT_INIT"/>
    <property type="molecule type" value="Genomic_DNA"/>
</dbReference>
<dbReference type="RefSeq" id="NP_835039.1">
    <property type="nucleotide sequence ID" value="NC_004722.1"/>
</dbReference>
<dbReference type="RefSeq" id="WP_001147171.1">
    <property type="nucleotide sequence ID" value="NZ_CP138336.1"/>
</dbReference>
<dbReference type="SMR" id="Q814P5"/>
<dbReference type="STRING" id="226900.BC_5378"/>
<dbReference type="KEGG" id="bce:BC5378"/>
<dbReference type="PATRIC" id="fig|226900.8.peg.5554"/>
<dbReference type="HOGENOM" id="CLU_148073_5_1_9"/>
<dbReference type="OrthoDB" id="5405937at2"/>
<dbReference type="Proteomes" id="UP000001417">
    <property type="component" value="Chromosome"/>
</dbReference>
<dbReference type="GO" id="GO:0016853">
    <property type="term" value="F:isomerase activity"/>
    <property type="evidence" value="ECO:0000318"/>
    <property type="project" value="GO_Central"/>
</dbReference>
<dbReference type="CDD" id="cd00491">
    <property type="entry name" value="4Oxalocrotonate_Tautomerase"/>
    <property type="match status" value="1"/>
</dbReference>
<dbReference type="Gene3D" id="3.30.429.10">
    <property type="entry name" value="Macrophage Migration Inhibitory Factor"/>
    <property type="match status" value="1"/>
</dbReference>
<dbReference type="InterPro" id="IPR018191">
    <property type="entry name" value="4-OT"/>
</dbReference>
<dbReference type="InterPro" id="IPR004370">
    <property type="entry name" value="4-OT-like_dom"/>
</dbReference>
<dbReference type="InterPro" id="IPR014347">
    <property type="entry name" value="Tautomerase/MIF_sf"/>
</dbReference>
<dbReference type="NCBIfam" id="NF002571">
    <property type="entry name" value="PRK02220.1"/>
    <property type="match status" value="1"/>
</dbReference>
<dbReference type="NCBIfam" id="TIGR00013">
    <property type="entry name" value="taut"/>
    <property type="match status" value="1"/>
</dbReference>
<dbReference type="PANTHER" id="PTHR35530:SF1">
    <property type="entry name" value="2-HYDROXYMUCONATE TAUTOMERASE"/>
    <property type="match status" value="1"/>
</dbReference>
<dbReference type="PANTHER" id="PTHR35530">
    <property type="entry name" value="TAUTOMERASE-RELATED"/>
    <property type="match status" value="1"/>
</dbReference>
<dbReference type="Pfam" id="PF01361">
    <property type="entry name" value="Tautomerase"/>
    <property type="match status" value="1"/>
</dbReference>
<dbReference type="SUPFAM" id="SSF55331">
    <property type="entry name" value="Tautomerase/MIF"/>
    <property type="match status" value="1"/>
</dbReference>
<organism>
    <name type="scientific">Bacillus cereus (strain ATCC 14579 / DSM 31 / CCUG 7414 / JCM 2152 / NBRC 15305 / NCIMB 9373 / NCTC 2599 / NRRL B-3711)</name>
    <dbReference type="NCBI Taxonomy" id="226900"/>
    <lineage>
        <taxon>Bacteria</taxon>
        <taxon>Bacillati</taxon>
        <taxon>Bacillota</taxon>
        <taxon>Bacilli</taxon>
        <taxon>Bacillales</taxon>
        <taxon>Bacillaceae</taxon>
        <taxon>Bacillus</taxon>
        <taxon>Bacillus cereus group</taxon>
    </lineage>
</organism>